<dbReference type="EC" id="2.7.11.1"/>
<dbReference type="EMBL" id="AK004783">
    <property type="protein sequence ID" value="BAB23561.1"/>
    <property type="molecule type" value="mRNA"/>
</dbReference>
<dbReference type="EMBL" id="AK154642">
    <property type="protein sequence ID" value="BAE32734.1"/>
    <property type="molecule type" value="mRNA"/>
</dbReference>
<dbReference type="EMBL" id="CH466522">
    <property type="protein sequence ID" value="EDL25913.1"/>
    <property type="molecule type" value="Genomic_DNA"/>
</dbReference>
<dbReference type="EMBL" id="BC037093">
    <property type="protein sequence ID" value="AAH37093.1"/>
    <property type="status" value="ALT_INIT"/>
    <property type="molecule type" value="mRNA"/>
</dbReference>
<dbReference type="EMBL" id="BC151153">
    <property type="protein sequence ID" value="AAI51154.1"/>
    <property type="molecule type" value="mRNA"/>
</dbReference>
<dbReference type="CCDS" id="CCDS52809.1">
    <molecule id="Q3U3Q1-1"/>
</dbReference>
<dbReference type="RefSeq" id="NP_082171.1">
    <molecule id="Q3U3Q1-1"/>
    <property type="nucleotide sequence ID" value="NM_027895.1"/>
</dbReference>
<dbReference type="SMR" id="Q3U3Q1"/>
<dbReference type="FunCoup" id="Q3U3Q1">
    <property type="interactions" value="2275"/>
</dbReference>
<dbReference type="STRING" id="10090.ENSMUSP00000059947"/>
<dbReference type="BindingDB" id="Q3U3Q1"/>
<dbReference type="ChEMBL" id="CHEMBL3832"/>
<dbReference type="DrugCentral" id="Q3U3Q1"/>
<dbReference type="iPTMnet" id="Q3U3Q1"/>
<dbReference type="PhosphoSitePlus" id="Q3U3Q1"/>
<dbReference type="PaxDb" id="10090-ENSMUSP00000059947"/>
<dbReference type="ProteomicsDB" id="298480">
    <molecule id="Q3U3Q1-1"/>
</dbReference>
<dbReference type="ProteomicsDB" id="298481">
    <molecule id="Q3U3Q1-2"/>
</dbReference>
<dbReference type="ProteomicsDB" id="298482">
    <molecule id="Q3U3Q1-3"/>
</dbReference>
<dbReference type="Antibodypedia" id="27077">
    <property type="antibodies" value="390 antibodies from 33 providers"/>
</dbReference>
<dbReference type="Ensembl" id="ENSMUST00000053230.7">
    <molecule id="Q3U3Q1-1"/>
    <property type="protein sequence ID" value="ENSMUSP00000059947.7"/>
    <property type="gene ID" value="ENSMUSG00000032308.10"/>
</dbReference>
<dbReference type="GeneID" id="71742"/>
<dbReference type="KEGG" id="mmu:71742"/>
<dbReference type="UCSC" id="uc009pvf.2">
    <molecule id="Q3U3Q1-1"/>
    <property type="organism name" value="mouse"/>
</dbReference>
<dbReference type="AGR" id="MGI:1918992"/>
<dbReference type="CTD" id="25989"/>
<dbReference type="MGI" id="MGI:1918992">
    <property type="gene designation" value="Ulk3"/>
</dbReference>
<dbReference type="VEuPathDB" id="HostDB:ENSMUSG00000032308"/>
<dbReference type="eggNOG" id="KOG0595">
    <property type="taxonomic scope" value="Eukaryota"/>
</dbReference>
<dbReference type="GeneTree" id="ENSGT00940000157689"/>
<dbReference type="HOGENOM" id="CLU_000288_63_58_1"/>
<dbReference type="InParanoid" id="Q3U3Q1"/>
<dbReference type="OMA" id="TQAVEHD"/>
<dbReference type="OrthoDB" id="346907at2759"/>
<dbReference type="PhylomeDB" id="Q3U3Q1"/>
<dbReference type="TreeFam" id="TF324551"/>
<dbReference type="Reactome" id="R-MMU-5632684">
    <property type="pathway name" value="Hedgehog 'on' state"/>
</dbReference>
<dbReference type="BioGRID-ORCS" id="71742">
    <property type="hits" value="5 hits in 81 CRISPR screens"/>
</dbReference>
<dbReference type="ChiTaRS" id="Ulk3">
    <property type="organism name" value="mouse"/>
</dbReference>
<dbReference type="PRO" id="PR:Q3U3Q1"/>
<dbReference type="Proteomes" id="UP000000589">
    <property type="component" value="Chromosome 9"/>
</dbReference>
<dbReference type="RNAct" id="Q3U3Q1">
    <property type="molecule type" value="protein"/>
</dbReference>
<dbReference type="Bgee" id="ENSMUSG00000032308">
    <property type="expression patterns" value="Expressed in retinal neural layer and 71 other cell types or tissues"/>
</dbReference>
<dbReference type="ExpressionAtlas" id="Q3U3Q1">
    <property type="expression patterns" value="baseline and differential"/>
</dbReference>
<dbReference type="GO" id="GO:0005737">
    <property type="term" value="C:cytoplasm"/>
    <property type="evidence" value="ECO:0000250"/>
    <property type="project" value="UniProtKB"/>
</dbReference>
<dbReference type="GO" id="GO:0005524">
    <property type="term" value="F:ATP binding"/>
    <property type="evidence" value="ECO:0007669"/>
    <property type="project" value="UniProtKB-KW"/>
</dbReference>
<dbReference type="GO" id="GO:0106310">
    <property type="term" value="F:protein serine kinase activity"/>
    <property type="evidence" value="ECO:0007669"/>
    <property type="project" value="RHEA"/>
</dbReference>
<dbReference type="GO" id="GO:0004674">
    <property type="term" value="F:protein serine/threonine kinase activity"/>
    <property type="evidence" value="ECO:0000250"/>
    <property type="project" value="UniProtKB"/>
</dbReference>
<dbReference type="GO" id="GO:0006914">
    <property type="term" value="P:autophagy"/>
    <property type="evidence" value="ECO:0007669"/>
    <property type="project" value="UniProtKB-KW"/>
</dbReference>
<dbReference type="GO" id="GO:0072537">
    <property type="term" value="P:fibroblast activation"/>
    <property type="evidence" value="ECO:0007669"/>
    <property type="project" value="Ensembl"/>
</dbReference>
<dbReference type="GO" id="GO:0045879">
    <property type="term" value="P:negative regulation of smoothened signaling pathway"/>
    <property type="evidence" value="ECO:0000250"/>
    <property type="project" value="UniProtKB"/>
</dbReference>
<dbReference type="GO" id="GO:0045880">
    <property type="term" value="P:positive regulation of smoothened signaling pathway"/>
    <property type="evidence" value="ECO:0000250"/>
    <property type="project" value="UniProtKB"/>
</dbReference>
<dbReference type="GO" id="GO:0046777">
    <property type="term" value="P:protein autophosphorylation"/>
    <property type="evidence" value="ECO:0000250"/>
    <property type="project" value="UniProtKB"/>
</dbReference>
<dbReference type="GO" id="GO:0010506">
    <property type="term" value="P:regulation of autophagy"/>
    <property type="evidence" value="ECO:0007669"/>
    <property type="project" value="InterPro"/>
</dbReference>
<dbReference type="GO" id="GO:0007224">
    <property type="term" value="P:smoothened signaling pathway"/>
    <property type="evidence" value="ECO:0007669"/>
    <property type="project" value="Ensembl"/>
</dbReference>
<dbReference type="CDD" id="cd02656">
    <property type="entry name" value="MIT"/>
    <property type="match status" value="1"/>
</dbReference>
<dbReference type="CDD" id="cd02684">
    <property type="entry name" value="MIT_2"/>
    <property type="match status" value="1"/>
</dbReference>
<dbReference type="CDD" id="cd14121">
    <property type="entry name" value="STKc_ULK3"/>
    <property type="match status" value="1"/>
</dbReference>
<dbReference type="FunFam" id="1.10.510.10:FF:000241">
    <property type="entry name" value="Putative serine/threonine-protein kinase ULK3"/>
    <property type="match status" value="1"/>
</dbReference>
<dbReference type="FunFam" id="3.30.200.20:FF:000238">
    <property type="entry name" value="Putative serine/threonine-protein kinase ULK3"/>
    <property type="match status" value="1"/>
</dbReference>
<dbReference type="FunFam" id="1.20.58.80:FF:000008">
    <property type="entry name" value="serine/threonine-protein kinase ULK3 isoform X1"/>
    <property type="match status" value="1"/>
</dbReference>
<dbReference type="FunFam" id="1.20.58.80:FF:000010">
    <property type="entry name" value="serine/threonine-protein kinase ULK3 isoform X1"/>
    <property type="match status" value="1"/>
</dbReference>
<dbReference type="Gene3D" id="3.30.200.20">
    <property type="entry name" value="Phosphorylase Kinase, domain 1"/>
    <property type="match status" value="1"/>
</dbReference>
<dbReference type="Gene3D" id="1.20.58.80">
    <property type="entry name" value="Phosphotransferase system, lactose/cellobiose-type IIA subunit"/>
    <property type="match status" value="2"/>
</dbReference>
<dbReference type="Gene3D" id="1.10.510.10">
    <property type="entry name" value="Transferase(Phosphotransferase) domain 1"/>
    <property type="match status" value="1"/>
</dbReference>
<dbReference type="InterPro" id="IPR045269">
    <property type="entry name" value="Atg1-like"/>
</dbReference>
<dbReference type="InterPro" id="IPR011009">
    <property type="entry name" value="Kinase-like_dom_sf"/>
</dbReference>
<dbReference type="InterPro" id="IPR007330">
    <property type="entry name" value="MIT_dom"/>
</dbReference>
<dbReference type="InterPro" id="IPR036181">
    <property type="entry name" value="MIT_dom_sf"/>
</dbReference>
<dbReference type="InterPro" id="IPR000719">
    <property type="entry name" value="Prot_kinase_dom"/>
</dbReference>
<dbReference type="InterPro" id="IPR017441">
    <property type="entry name" value="Protein_kinase_ATP_BS"/>
</dbReference>
<dbReference type="InterPro" id="IPR008271">
    <property type="entry name" value="Ser/Thr_kinase_AS"/>
</dbReference>
<dbReference type="PANTHER" id="PTHR24348">
    <property type="entry name" value="SERINE/THREONINE-PROTEIN KINASE UNC-51-RELATED"/>
    <property type="match status" value="1"/>
</dbReference>
<dbReference type="PANTHER" id="PTHR24348:SF65">
    <property type="entry name" value="SERINE_THREONINE-PROTEIN KINASE ULK3"/>
    <property type="match status" value="1"/>
</dbReference>
<dbReference type="Pfam" id="PF04212">
    <property type="entry name" value="MIT"/>
    <property type="match status" value="2"/>
</dbReference>
<dbReference type="Pfam" id="PF00069">
    <property type="entry name" value="Pkinase"/>
    <property type="match status" value="1"/>
</dbReference>
<dbReference type="SMART" id="SM00745">
    <property type="entry name" value="MIT"/>
    <property type="match status" value="2"/>
</dbReference>
<dbReference type="SMART" id="SM00220">
    <property type="entry name" value="S_TKc"/>
    <property type="match status" value="1"/>
</dbReference>
<dbReference type="SUPFAM" id="SSF116846">
    <property type="entry name" value="MIT domain"/>
    <property type="match status" value="2"/>
</dbReference>
<dbReference type="SUPFAM" id="SSF56112">
    <property type="entry name" value="Protein kinase-like (PK-like)"/>
    <property type="match status" value="1"/>
</dbReference>
<dbReference type="PROSITE" id="PS00107">
    <property type="entry name" value="PROTEIN_KINASE_ATP"/>
    <property type="match status" value="1"/>
</dbReference>
<dbReference type="PROSITE" id="PS50011">
    <property type="entry name" value="PROTEIN_KINASE_DOM"/>
    <property type="match status" value="1"/>
</dbReference>
<dbReference type="PROSITE" id="PS00108">
    <property type="entry name" value="PROTEIN_KINASE_ST"/>
    <property type="match status" value="1"/>
</dbReference>
<evidence type="ECO:0000250" key="1"/>
<evidence type="ECO:0000250" key="2">
    <source>
        <dbReference type="UniProtKB" id="Q6PHR2"/>
    </source>
</evidence>
<evidence type="ECO:0000255" key="3">
    <source>
        <dbReference type="PROSITE-ProRule" id="PRU00159"/>
    </source>
</evidence>
<evidence type="ECO:0000255" key="4">
    <source>
        <dbReference type="PROSITE-ProRule" id="PRU10027"/>
    </source>
</evidence>
<evidence type="ECO:0000303" key="5">
    <source>
    </source>
</evidence>
<evidence type="ECO:0000303" key="6">
    <source>
    </source>
</evidence>
<evidence type="ECO:0000305" key="7"/>
<comment type="function">
    <text evidence="1">Serine/threonine protein kinase that acts as a regulator of Sonic hedgehog (SHH) signaling and autophagy. Acts as a negative regulator of SHH signaling in the absence of SHH ligand: interacts with SUFU, thereby inactivating the protein kinase activity and preventing phosphorylation of GLI proteins (GLI1, GLI2 and/or GLI3). Positively regulates SHH signaling in the presence of SHH: dissociates from SUFU, autophosphorylates and mediates phosphorylation of GLI2, activating it and promoting its nuclear translocation. Phosphorylates in vitro GLI2, as well as GLI1 and GLI3, although less efficiently. Also acts as a regulator of autophagy: following cellular senescence, able to induce autophagy (By similarity).</text>
</comment>
<comment type="catalytic activity">
    <reaction>
        <text>L-seryl-[protein] + ATP = O-phospho-L-seryl-[protein] + ADP + H(+)</text>
        <dbReference type="Rhea" id="RHEA:17989"/>
        <dbReference type="Rhea" id="RHEA-COMP:9863"/>
        <dbReference type="Rhea" id="RHEA-COMP:11604"/>
        <dbReference type="ChEBI" id="CHEBI:15378"/>
        <dbReference type="ChEBI" id="CHEBI:29999"/>
        <dbReference type="ChEBI" id="CHEBI:30616"/>
        <dbReference type="ChEBI" id="CHEBI:83421"/>
        <dbReference type="ChEBI" id="CHEBI:456216"/>
        <dbReference type="EC" id="2.7.11.1"/>
    </reaction>
</comment>
<comment type="catalytic activity">
    <reaction>
        <text>L-threonyl-[protein] + ATP = O-phospho-L-threonyl-[protein] + ADP + H(+)</text>
        <dbReference type="Rhea" id="RHEA:46608"/>
        <dbReference type="Rhea" id="RHEA-COMP:11060"/>
        <dbReference type="Rhea" id="RHEA-COMP:11605"/>
        <dbReference type="ChEBI" id="CHEBI:15378"/>
        <dbReference type="ChEBI" id="CHEBI:30013"/>
        <dbReference type="ChEBI" id="CHEBI:30616"/>
        <dbReference type="ChEBI" id="CHEBI:61977"/>
        <dbReference type="ChEBI" id="CHEBI:456216"/>
        <dbReference type="EC" id="2.7.11.1"/>
    </reaction>
</comment>
<comment type="subunit">
    <text evidence="1">Interacts (via protein kinase domain) with SUFU.</text>
</comment>
<comment type="subcellular location">
    <subcellularLocation>
        <location evidence="1">Cytoplasm</location>
    </subcellularLocation>
    <text evidence="1">Localizes to pre-autophagosomal structure during cellular senescence.</text>
</comment>
<comment type="alternative products">
    <event type="alternative splicing"/>
    <isoform>
        <id>Q3U3Q1-1</id>
        <name>1</name>
        <sequence type="displayed"/>
    </isoform>
    <isoform>
        <id>Q3U3Q1-2</id>
        <name>2</name>
        <sequence type="described" ref="VSP_020604"/>
    </isoform>
    <isoform>
        <id>Q3U3Q1-3</id>
        <name>3</name>
        <sequence type="described" ref="VSP_020602 VSP_020603"/>
    </isoform>
</comment>
<comment type="PTM">
    <text evidence="1">Autophosphorylated. Autophosphorylation is blocked by interaction with SUFU (By similarity).</text>
</comment>
<comment type="similarity">
    <text evidence="3">Belongs to the protein kinase superfamily. Ser/Thr protein kinase family. APG1/unc-51/ULK1 subfamily.</text>
</comment>
<comment type="sequence caution" evidence="7">
    <conflict type="erroneous initiation">
        <sequence resource="EMBL-CDS" id="AAH37093"/>
    </conflict>
    <text>Extended N-terminus.</text>
</comment>
<name>ULK3_MOUSE</name>
<proteinExistence type="evidence at transcript level"/>
<organism>
    <name type="scientific">Mus musculus</name>
    <name type="common">Mouse</name>
    <dbReference type="NCBI Taxonomy" id="10090"/>
    <lineage>
        <taxon>Eukaryota</taxon>
        <taxon>Metazoa</taxon>
        <taxon>Chordata</taxon>
        <taxon>Craniata</taxon>
        <taxon>Vertebrata</taxon>
        <taxon>Euteleostomi</taxon>
        <taxon>Mammalia</taxon>
        <taxon>Eutheria</taxon>
        <taxon>Euarchontoglires</taxon>
        <taxon>Glires</taxon>
        <taxon>Rodentia</taxon>
        <taxon>Myomorpha</taxon>
        <taxon>Muroidea</taxon>
        <taxon>Muridae</taxon>
        <taxon>Murinae</taxon>
        <taxon>Mus</taxon>
        <taxon>Mus</taxon>
    </lineage>
</organism>
<protein>
    <recommendedName>
        <fullName>Serine/threonine-protein kinase ULK3</fullName>
        <ecNumber>2.7.11.1</ecNumber>
    </recommendedName>
    <alternativeName>
        <fullName>Unc-51-like kinase 3</fullName>
    </alternativeName>
</protein>
<sequence length="472" mass="53572">MAGPSWGLPRLDGFILTERLGSGTYATVYKAYAKKDTREVVAIKCVAKKSLNKASVENLLTEIEILKGIRHPHIVQLKDFQWDNDNIYLIMEFCAGGDLSRFIHTRRILPEKVARVFMQQLASALQFLHERNISHLDLKPQNILLSSLEKPHLKLADFGFAQHMSPWDEKHVLRGSPLYMAPEMVCRRQYDARVDLWSVGVILYEALFGQPPFASRSFSELEEKIRSNRVIELPLRPQLSLDCRDLLQRLLERDPARRISFKDFFAHPWVDLEHMPSGESLAQARALVVEAVKKDQEGDAAAALSLYCKALDFFVPALHYEVDAQRKEAIKAKVGQYVSRAEELKAIVSSSNQALLRQGTTVQELLREMARDKPRLLAALEVASAALAKEEEAGKEQDALDLYQHSLGELLVLLAAEAPGRRRELLHTEVQNLMARAEYLKEQIKIRESHWEAESLDKEGLSESVRSSCTLQ</sequence>
<accession>Q3U3Q1</accession>
<accession>B2RXB9</accession>
<accession>Q8K1X6</accession>
<accession>Q9DBR8</accession>
<keyword id="KW-0025">Alternative splicing</keyword>
<keyword id="KW-0067">ATP-binding</keyword>
<keyword id="KW-0072">Autophagy</keyword>
<keyword id="KW-0963">Cytoplasm</keyword>
<keyword id="KW-0418">Kinase</keyword>
<keyword id="KW-0547">Nucleotide-binding</keyword>
<keyword id="KW-0597">Phosphoprotein</keyword>
<keyword id="KW-1185">Reference proteome</keyword>
<keyword id="KW-0677">Repeat</keyword>
<keyword id="KW-0723">Serine/threonine-protein kinase</keyword>
<keyword id="KW-0808">Transferase</keyword>
<gene>
    <name type="primary">Ulk3</name>
</gene>
<feature type="chain" id="PRO_0000250151" description="Serine/threonine-protein kinase ULK3">
    <location>
        <begin position="1"/>
        <end position="472"/>
    </location>
</feature>
<feature type="domain" description="Protein kinase" evidence="3">
    <location>
        <begin position="14"/>
        <end position="270"/>
    </location>
</feature>
<feature type="domain" description="MIT 1">
    <location>
        <begin position="280"/>
        <end position="348"/>
    </location>
</feature>
<feature type="domain" description="MIT 2">
    <location>
        <begin position="375"/>
        <end position="444"/>
    </location>
</feature>
<feature type="active site" description="Proton acceptor" evidence="3 4">
    <location>
        <position position="137"/>
    </location>
</feature>
<feature type="binding site" evidence="3">
    <location>
        <begin position="20"/>
        <end position="28"/>
    </location>
    <ligand>
        <name>ATP</name>
        <dbReference type="ChEBI" id="CHEBI:30616"/>
    </ligand>
</feature>
<feature type="binding site" evidence="3">
    <location>
        <position position="44"/>
    </location>
    <ligand>
        <name>ATP</name>
        <dbReference type="ChEBI" id="CHEBI:30616"/>
    </ligand>
</feature>
<feature type="modified residue" description="Phosphoserine" evidence="2">
    <location>
        <position position="176"/>
    </location>
</feature>
<feature type="modified residue" description="Phosphoserine; by autocatalysis" evidence="2">
    <location>
        <position position="350"/>
    </location>
</feature>
<feature type="modified residue" description="Phosphoserine; by autocatalysis" evidence="2">
    <location>
        <position position="384"/>
    </location>
</feature>
<feature type="modified residue" description="Phosphoserine; by autocatalysis" evidence="2">
    <location>
        <position position="464"/>
    </location>
</feature>
<feature type="splice variant" id="VSP_020602" description="In isoform 3." evidence="6">
    <original>EALFGQPPFASRSFSELEEKIRSNRVIELPLRPQLSLDCRDLLQRLLERDPARRISFKDFFAHPWVDLEHMPSGESLAQARALVVEAVKKD</original>
    <variation>GETSLPLLSTLRVTLYLGQAFLGLSWVQMRIKGSTLRDFWSPFCGRARPDLTLFPSGPSSAFFHRSPLWAAPLCLQIVLRARRKDSQQSGD</variation>
    <location>
        <begin position="205"/>
        <end position="295"/>
    </location>
</feature>
<feature type="splice variant" id="VSP_020603" description="In isoform 3." evidence="6">
    <location>
        <begin position="296"/>
        <end position="472"/>
    </location>
</feature>
<feature type="splice variant" id="VSP_020604" description="In isoform 2." evidence="5">
    <original>QNLMARAEYLKEQIKIRESHWEAESLDKEGLSESVRSSCTLQ</original>
    <variation>GVGVEKCSFPSSYSGLWDINRSHMDFPCLRIVRSVTQDFCA</variation>
    <location>
        <begin position="431"/>
        <end position="472"/>
    </location>
</feature>
<feature type="sequence conflict" description="In Ref. 3; AAH37093." evidence="7" ref="3">
    <original>P</original>
    <variation>S</variation>
    <location>
        <position position="151"/>
    </location>
</feature>
<reference key="1">
    <citation type="journal article" date="2005" name="Science">
        <title>The transcriptional landscape of the mammalian genome.</title>
        <authorList>
            <person name="Carninci P."/>
            <person name="Kasukawa T."/>
            <person name="Katayama S."/>
            <person name="Gough J."/>
            <person name="Frith M.C."/>
            <person name="Maeda N."/>
            <person name="Oyama R."/>
            <person name="Ravasi T."/>
            <person name="Lenhard B."/>
            <person name="Wells C."/>
            <person name="Kodzius R."/>
            <person name="Shimokawa K."/>
            <person name="Bajic V.B."/>
            <person name="Brenner S.E."/>
            <person name="Batalov S."/>
            <person name="Forrest A.R."/>
            <person name="Zavolan M."/>
            <person name="Davis M.J."/>
            <person name="Wilming L.G."/>
            <person name="Aidinis V."/>
            <person name="Allen J.E."/>
            <person name="Ambesi-Impiombato A."/>
            <person name="Apweiler R."/>
            <person name="Aturaliya R.N."/>
            <person name="Bailey T.L."/>
            <person name="Bansal M."/>
            <person name="Baxter L."/>
            <person name="Beisel K.W."/>
            <person name="Bersano T."/>
            <person name="Bono H."/>
            <person name="Chalk A.M."/>
            <person name="Chiu K.P."/>
            <person name="Choudhary V."/>
            <person name="Christoffels A."/>
            <person name="Clutterbuck D.R."/>
            <person name="Crowe M.L."/>
            <person name="Dalla E."/>
            <person name="Dalrymple B.P."/>
            <person name="de Bono B."/>
            <person name="Della Gatta G."/>
            <person name="di Bernardo D."/>
            <person name="Down T."/>
            <person name="Engstrom P."/>
            <person name="Fagiolini M."/>
            <person name="Faulkner G."/>
            <person name="Fletcher C.F."/>
            <person name="Fukushima T."/>
            <person name="Furuno M."/>
            <person name="Futaki S."/>
            <person name="Gariboldi M."/>
            <person name="Georgii-Hemming P."/>
            <person name="Gingeras T.R."/>
            <person name="Gojobori T."/>
            <person name="Green R.E."/>
            <person name="Gustincich S."/>
            <person name="Harbers M."/>
            <person name="Hayashi Y."/>
            <person name="Hensch T.K."/>
            <person name="Hirokawa N."/>
            <person name="Hill D."/>
            <person name="Huminiecki L."/>
            <person name="Iacono M."/>
            <person name="Ikeo K."/>
            <person name="Iwama A."/>
            <person name="Ishikawa T."/>
            <person name="Jakt M."/>
            <person name="Kanapin A."/>
            <person name="Katoh M."/>
            <person name="Kawasawa Y."/>
            <person name="Kelso J."/>
            <person name="Kitamura H."/>
            <person name="Kitano H."/>
            <person name="Kollias G."/>
            <person name="Krishnan S.P."/>
            <person name="Kruger A."/>
            <person name="Kummerfeld S.K."/>
            <person name="Kurochkin I.V."/>
            <person name="Lareau L.F."/>
            <person name="Lazarevic D."/>
            <person name="Lipovich L."/>
            <person name="Liu J."/>
            <person name="Liuni S."/>
            <person name="McWilliam S."/>
            <person name="Madan Babu M."/>
            <person name="Madera M."/>
            <person name="Marchionni L."/>
            <person name="Matsuda H."/>
            <person name="Matsuzawa S."/>
            <person name="Miki H."/>
            <person name="Mignone F."/>
            <person name="Miyake S."/>
            <person name="Morris K."/>
            <person name="Mottagui-Tabar S."/>
            <person name="Mulder N."/>
            <person name="Nakano N."/>
            <person name="Nakauchi H."/>
            <person name="Ng P."/>
            <person name="Nilsson R."/>
            <person name="Nishiguchi S."/>
            <person name="Nishikawa S."/>
            <person name="Nori F."/>
            <person name="Ohara O."/>
            <person name="Okazaki Y."/>
            <person name="Orlando V."/>
            <person name="Pang K.C."/>
            <person name="Pavan W.J."/>
            <person name="Pavesi G."/>
            <person name="Pesole G."/>
            <person name="Petrovsky N."/>
            <person name="Piazza S."/>
            <person name="Reed J."/>
            <person name="Reid J.F."/>
            <person name="Ring B.Z."/>
            <person name="Ringwald M."/>
            <person name="Rost B."/>
            <person name="Ruan Y."/>
            <person name="Salzberg S.L."/>
            <person name="Sandelin A."/>
            <person name="Schneider C."/>
            <person name="Schoenbach C."/>
            <person name="Sekiguchi K."/>
            <person name="Semple C.A."/>
            <person name="Seno S."/>
            <person name="Sessa L."/>
            <person name="Sheng Y."/>
            <person name="Shibata Y."/>
            <person name="Shimada H."/>
            <person name="Shimada K."/>
            <person name="Silva D."/>
            <person name="Sinclair B."/>
            <person name="Sperling S."/>
            <person name="Stupka E."/>
            <person name="Sugiura K."/>
            <person name="Sultana R."/>
            <person name="Takenaka Y."/>
            <person name="Taki K."/>
            <person name="Tammoja K."/>
            <person name="Tan S.L."/>
            <person name="Tang S."/>
            <person name="Taylor M.S."/>
            <person name="Tegner J."/>
            <person name="Teichmann S.A."/>
            <person name="Ueda H.R."/>
            <person name="van Nimwegen E."/>
            <person name="Verardo R."/>
            <person name="Wei C.L."/>
            <person name="Yagi K."/>
            <person name="Yamanishi H."/>
            <person name="Zabarovsky E."/>
            <person name="Zhu S."/>
            <person name="Zimmer A."/>
            <person name="Hide W."/>
            <person name="Bult C."/>
            <person name="Grimmond S.M."/>
            <person name="Teasdale R.D."/>
            <person name="Liu E.T."/>
            <person name="Brusic V."/>
            <person name="Quackenbush J."/>
            <person name="Wahlestedt C."/>
            <person name="Mattick J.S."/>
            <person name="Hume D.A."/>
            <person name="Kai C."/>
            <person name="Sasaki D."/>
            <person name="Tomaru Y."/>
            <person name="Fukuda S."/>
            <person name="Kanamori-Katayama M."/>
            <person name="Suzuki M."/>
            <person name="Aoki J."/>
            <person name="Arakawa T."/>
            <person name="Iida J."/>
            <person name="Imamura K."/>
            <person name="Itoh M."/>
            <person name="Kato T."/>
            <person name="Kawaji H."/>
            <person name="Kawagashira N."/>
            <person name="Kawashima T."/>
            <person name="Kojima M."/>
            <person name="Kondo S."/>
            <person name="Konno H."/>
            <person name="Nakano K."/>
            <person name="Ninomiya N."/>
            <person name="Nishio T."/>
            <person name="Okada M."/>
            <person name="Plessy C."/>
            <person name="Shibata K."/>
            <person name="Shiraki T."/>
            <person name="Suzuki S."/>
            <person name="Tagami M."/>
            <person name="Waki K."/>
            <person name="Watahiki A."/>
            <person name="Okamura-Oho Y."/>
            <person name="Suzuki H."/>
            <person name="Kawai J."/>
            <person name="Hayashizaki Y."/>
        </authorList>
    </citation>
    <scope>NUCLEOTIDE SEQUENCE [LARGE SCALE MRNA] (ISOFORMS 1 AND 3)</scope>
    <source>
        <strain>C57BL/6J</strain>
        <strain>NOD</strain>
        <tissue>Lung</tissue>
    </source>
</reference>
<reference key="2">
    <citation type="submission" date="2005-07" db="EMBL/GenBank/DDBJ databases">
        <authorList>
            <person name="Mural R.J."/>
            <person name="Adams M.D."/>
            <person name="Myers E.W."/>
            <person name="Smith H.O."/>
            <person name="Venter J.C."/>
        </authorList>
    </citation>
    <scope>NUCLEOTIDE SEQUENCE [LARGE SCALE GENOMIC DNA]</scope>
</reference>
<reference key="3">
    <citation type="journal article" date="2004" name="Genome Res.">
        <title>The status, quality, and expansion of the NIH full-length cDNA project: the Mammalian Gene Collection (MGC).</title>
        <authorList>
            <consortium name="The MGC Project Team"/>
        </authorList>
    </citation>
    <scope>NUCLEOTIDE SEQUENCE [LARGE SCALE MRNA] (ISOFORMS 1 AND 2)</scope>
    <source>
        <strain>FVB/N</strain>
        <tissue>Brain</tissue>
        <tissue>Mammary tumor</tissue>
    </source>
</reference>